<accession>Q5ZJG3</accession>
<evidence type="ECO:0000255" key="1">
    <source>
        <dbReference type="PROSITE-ProRule" id="PRU00507"/>
    </source>
</evidence>
<evidence type="ECO:0000256" key="2">
    <source>
        <dbReference type="SAM" id="MobiDB-lite"/>
    </source>
</evidence>
<evidence type="ECO:0000305" key="3"/>
<keyword id="KW-1185">Reference proteome</keyword>
<protein>
    <recommendedName>
        <fullName>Transcription factor BTF3 homolog 4</fullName>
    </recommendedName>
    <alternativeName>
        <fullName>Basic transcription factor 3-like 4</fullName>
    </alternativeName>
</protein>
<dbReference type="EMBL" id="AJ720471">
    <property type="protein sequence ID" value="CAG32130.1"/>
    <property type="molecule type" value="mRNA"/>
</dbReference>
<dbReference type="RefSeq" id="NP_001026456.1">
    <property type="nucleotide sequence ID" value="NM_001031285.1"/>
</dbReference>
<dbReference type="SMR" id="Q5ZJG3"/>
<dbReference type="FunCoup" id="Q5ZJG3">
    <property type="interactions" value="3256"/>
</dbReference>
<dbReference type="STRING" id="9031.ENSGALP00000017180"/>
<dbReference type="PaxDb" id="9031-ENSGALP00000041327"/>
<dbReference type="GeneID" id="424638"/>
<dbReference type="KEGG" id="gga:424638"/>
<dbReference type="CTD" id="91408"/>
<dbReference type="VEuPathDB" id="HostDB:geneid_424638"/>
<dbReference type="eggNOG" id="KOG2240">
    <property type="taxonomic scope" value="Eukaryota"/>
</dbReference>
<dbReference type="InParanoid" id="Q5ZJG3"/>
<dbReference type="OrthoDB" id="8033832at2759"/>
<dbReference type="PhylomeDB" id="Q5ZJG3"/>
<dbReference type="PRO" id="PR:Q5ZJG3"/>
<dbReference type="Proteomes" id="UP000000539">
    <property type="component" value="Unassembled WGS sequence"/>
</dbReference>
<dbReference type="CDD" id="cd22055">
    <property type="entry name" value="NAC_BTF3"/>
    <property type="match status" value="1"/>
</dbReference>
<dbReference type="FunFam" id="2.20.70.30:FF:000001">
    <property type="entry name" value="Transcription factor BTF3 homolog"/>
    <property type="match status" value="1"/>
</dbReference>
<dbReference type="Gene3D" id="2.20.70.30">
    <property type="entry name" value="Nascent polypeptide-associated complex domain"/>
    <property type="match status" value="1"/>
</dbReference>
<dbReference type="InterPro" id="IPR039370">
    <property type="entry name" value="BTF3"/>
</dbReference>
<dbReference type="InterPro" id="IPR038187">
    <property type="entry name" value="NAC_A/B_dom_sf"/>
</dbReference>
<dbReference type="InterPro" id="IPR002715">
    <property type="entry name" value="Nas_poly-pep-assoc_cplx_dom"/>
</dbReference>
<dbReference type="PANTHER" id="PTHR10351">
    <property type="entry name" value="TRANSCRIPTION FACTOR BTF3 FAMILY MEMBER"/>
    <property type="match status" value="1"/>
</dbReference>
<dbReference type="Pfam" id="PF01849">
    <property type="entry name" value="NAC"/>
    <property type="match status" value="1"/>
</dbReference>
<dbReference type="SMART" id="SM01407">
    <property type="entry name" value="NAC"/>
    <property type="match status" value="1"/>
</dbReference>
<dbReference type="PROSITE" id="PS51151">
    <property type="entry name" value="NAC_AB"/>
    <property type="match status" value="1"/>
</dbReference>
<gene>
    <name type="primary">BTF3L4</name>
    <name type="ORF">RCJMB04_18g17</name>
</gene>
<reference key="1">
    <citation type="journal article" date="2005" name="Genome Biol.">
        <title>Full-length cDNAs from chicken bursal lymphocytes to facilitate gene function analysis.</title>
        <authorList>
            <person name="Caldwell R.B."/>
            <person name="Kierzek A.M."/>
            <person name="Arakawa H."/>
            <person name="Bezzubov Y."/>
            <person name="Zaim J."/>
            <person name="Fiedler P."/>
            <person name="Kutter S."/>
            <person name="Blagodatski A."/>
            <person name="Kostovska D."/>
            <person name="Koter M."/>
            <person name="Plachy J."/>
            <person name="Carninci P."/>
            <person name="Hayashizaki Y."/>
            <person name="Buerstedde J.-M."/>
        </authorList>
    </citation>
    <scope>NUCLEOTIDE SEQUENCE [LARGE SCALE MRNA]</scope>
    <source>
        <strain>CB</strain>
        <tissue>Bursa of Fabricius</tissue>
    </source>
</reference>
<organism>
    <name type="scientific">Gallus gallus</name>
    <name type="common">Chicken</name>
    <dbReference type="NCBI Taxonomy" id="9031"/>
    <lineage>
        <taxon>Eukaryota</taxon>
        <taxon>Metazoa</taxon>
        <taxon>Chordata</taxon>
        <taxon>Craniata</taxon>
        <taxon>Vertebrata</taxon>
        <taxon>Euteleostomi</taxon>
        <taxon>Archelosauria</taxon>
        <taxon>Archosauria</taxon>
        <taxon>Dinosauria</taxon>
        <taxon>Saurischia</taxon>
        <taxon>Theropoda</taxon>
        <taxon>Coelurosauria</taxon>
        <taxon>Aves</taxon>
        <taxon>Neognathae</taxon>
        <taxon>Galloanserae</taxon>
        <taxon>Galliformes</taxon>
        <taxon>Phasianidae</taxon>
        <taxon>Phasianinae</taxon>
        <taxon>Gallus</taxon>
    </lineage>
</organism>
<sequence length="158" mass="17232">MNQEKLAKLQAQVRIGGKGTARRKKKVVHRTATADDKKLQSSLKKLAVNNIAGIEEVNMIKDDGTVIHFNNPKVQASLSANTFAITGHAEAKPITEMLPGILSQLGADSLTSLRKLAEQFPRQVLDSKAPKSEDIDEEDDDVPDLAENFDEASKNEAN</sequence>
<proteinExistence type="evidence at transcript level"/>
<feature type="chain" id="PRO_0000307382" description="Transcription factor BTF3 homolog 4">
    <location>
        <begin position="1"/>
        <end position="158"/>
    </location>
</feature>
<feature type="domain" description="NAC-A/B" evidence="1">
    <location>
        <begin position="33"/>
        <end position="98"/>
    </location>
</feature>
<feature type="region of interest" description="Disordered" evidence="2">
    <location>
        <begin position="124"/>
        <end position="158"/>
    </location>
</feature>
<feature type="compositionally biased region" description="Acidic residues" evidence="2">
    <location>
        <begin position="134"/>
        <end position="150"/>
    </location>
</feature>
<name>BT3L4_CHICK</name>
<comment type="similarity">
    <text evidence="3">Belongs to the NAC-beta family.</text>
</comment>